<sequence>MKLCVTFLLILVILPSVTGEKSSKRTLSGAALRGDWGMCSGIGQGCGQDSNCCGDMCCYGQICAMTFAACGP</sequence>
<evidence type="ECO:0000250" key="1"/>
<evidence type="ECO:0000250" key="2">
    <source>
        <dbReference type="UniProtKB" id="Q7Z094"/>
    </source>
</evidence>
<evidence type="ECO:0000255" key="3"/>
<evidence type="ECO:0000305" key="4"/>
<reference key="1">
    <citation type="journal article" date="2005" name="FEBS J.">
        <title>Characterization of D-amino-acid-containing excitatory conotoxins and redefinition of the I-conotoxin superfamily.</title>
        <authorList>
            <person name="Buczek O."/>
            <person name="Yoshikami D."/>
            <person name="Watkins M."/>
            <person name="Bulaj G."/>
            <person name="Jimenez E.C."/>
            <person name="Olivera B.M."/>
        </authorList>
    </citation>
    <scope>NUCLEOTIDE SEQUENCE [MRNA]</scope>
    <source>
        <tissue>Venom duct</tissue>
    </source>
</reference>
<reference key="2">
    <citation type="journal article" date="2005" name="FEBS J.">
        <authorList>
            <person name="Buczek O."/>
            <person name="Yoshikami D."/>
            <person name="Watkins M."/>
            <person name="Bulaj G."/>
            <person name="Jimenez E.C."/>
            <person name="Olivera B.M."/>
        </authorList>
    </citation>
    <scope>ERRATUM OF PUBMED:16098199</scope>
</reference>
<reference key="3">
    <citation type="journal article" date="2010" name="Mol. Phylogenet. Evol.">
        <title>Evolution of Conus peptide toxins: analysis of Conus californicus Reeve, 1844.</title>
        <authorList>
            <person name="Biggs J.S."/>
            <person name="Watkins M."/>
            <person name="Puillandre N."/>
            <person name="Ownby J.P."/>
            <person name="Lopez-Vera E."/>
            <person name="Christensen S."/>
            <person name="Moreno K.J."/>
            <person name="Bernaldez J."/>
            <person name="Licea-Navarro A."/>
            <person name="Corneli P.S."/>
            <person name="Olivera B.M."/>
        </authorList>
    </citation>
    <scope>NUCLEOTIDE SEQUENCE [GENOMIC DNA]</scope>
</reference>
<protein>
    <recommendedName>
        <fullName>Conotoxin Ep11.1</fullName>
    </recommendedName>
</protein>
<comment type="subcellular location">
    <subcellularLocation>
        <location evidence="1">Secreted</location>
    </subcellularLocation>
</comment>
<comment type="tissue specificity">
    <text>Expressed by the venom duct.</text>
</comment>
<comment type="domain">
    <text>The cysteine framework is XI (C-C-CC-CC-C-C).</text>
</comment>
<comment type="similarity">
    <text evidence="4">Belongs to the conotoxin I1 superfamily.</text>
</comment>
<organism>
    <name type="scientific">Conus episcopatus</name>
    <name type="common">Bishop's cone</name>
    <dbReference type="NCBI Taxonomy" id="88764"/>
    <lineage>
        <taxon>Eukaryota</taxon>
        <taxon>Metazoa</taxon>
        <taxon>Spiralia</taxon>
        <taxon>Lophotrochozoa</taxon>
        <taxon>Mollusca</taxon>
        <taxon>Gastropoda</taxon>
        <taxon>Caenogastropoda</taxon>
        <taxon>Neogastropoda</taxon>
        <taxon>Conoidea</taxon>
        <taxon>Conidae</taxon>
        <taxon>Conus</taxon>
        <taxon>Darioconus</taxon>
    </lineage>
</organism>
<keyword id="KW-0165">Cleavage on pair of basic residues</keyword>
<keyword id="KW-1015">Disulfide bond</keyword>
<keyword id="KW-0872">Ion channel impairing toxin</keyword>
<keyword id="KW-0528">Neurotoxin</keyword>
<keyword id="KW-0964">Secreted</keyword>
<keyword id="KW-0732">Signal</keyword>
<keyword id="KW-0800">Toxin</keyword>
<dbReference type="EMBL" id="FJ959109">
    <property type="protein sequence ID" value="ADB93079.1"/>
    <property type="molecule type" value="Genomic_DNA"/>
</dbReference>
<dbReference type="SMR" id="P0C253"/>
<dbReference type="ConoServer" id="1453">
    <property type="toxin name" value="Ep11.1 precursor"/>
</dbReference>
<dbReference type="GO" id="GO:0005576">
    <property type="term" value="C:extracellular region"/>
    <property type="evidence" value="ECO:0007669"/>
    <property type="project" value="UniProtKB-SubCell"/>
</dbReference>
<dbReference type="GO" id="GO:0099106">
    <property type="term" value="F:ion channel regulator activity"/>
    <property type="evidence" value="ECO:0007669"/>
    <property type="project" value="UniProtKB-KW"/>
</dbReference>
<dbReference type="GO" id="GO:0090729">
    <property type="term" value="F:toxin activity"/>
    <property type="evidence" value="ECO:0007669"/>
    <property type="project" value="UniProtKB-KW"/>
</dbReference>
<dbReference type="InterPro" id="IPR013141">
    <property type="entry name" value="Conotoxin-I_CS"/>
</dbReference>
<dbReference type="PROSITE" id="PS60019">
    <property type="entry name" value="I_CONOTOXIN"/>
    <property type="match status" value="1"/>
</dbReference>
<proteinExistence type="evidence at transcript level"/>
<accession>P0C253</accession>
<accession>D6C4G7</accession>
<feature type="signal peptide" evidence="3">
    <location>
        <begin position="1"/>
        <end position="19"/>
    </location>
</feature>
<feature type="propeptide" id="PRO_0000262677" evidence="3">
    <location>
        <begin position="20"/>
        <end position="32"/>
    </location>
</feature>
<feature type="chain" id="PRO_0000262678" description="Conotoxin Ep11.1">
    <location>
        <begin position="34"/>
        <end position="72"/>
    </location>
</feature>
<feature type="disulfide bond" evidence="2">
    <location>
        <begin position="39"/>
        <end position="53"/>
    </location>
</feature>
<feature type="disulfide bond" evidence="2">
    <location>
        <begin position="46"/>
        <end position="58"/>
    </location>
</feature>
<feature type="disulfide bond" evidence="2">
    <location>
        <begin position="52"/>
        <end position="63"/>
    </location>
</feature>
<feature type="disulfide bond" evidence="2">
    <location>
        <begin position="57"/>
        <end position="70"/>
    </location>
</feature>
<name>I1B1_CONEP</name>